<protein>
    <recommendedName>
        <fullName evidence="1">3-dehydroquinate dehydratase</fullName>
        <shortName evidence="1">3-dehydroquinase</shortName>
        <ecNumber evidence="1">4.2.1.10</ecNumber>
    </recommendedName>
    <alternativeName>
        <fullName evidence="1">Type I DHQase</fullName>
    </alternativeName>
    <alternativeName>
        <fullName evidence="1">Type I dehydroquinase</fullName>
        <shortName evidence="1">DHQ1</shortName>
    </alternativeName>
</protein>
<keyword id="KW-0028">Amino-acid biosynthesis</keyword>
<keyword id="KW-0057">Aromatic amino acid biosynthesis</keyword>
<keyword id="KW-0456">Lyase</keyword>
<keyword id="KW-0704">Schiff base</keyword>
<name>AROD_THEVO</name>
<dbReference type="EC" id="4.2.1.10" evidence="1"/>
<dbReference type="EMBL" id="BA000011">
    <property type="protein sequence ID" value="BAB59336.1"/>
    <property type="molecule type" value="Genomic_DNA"/>
</dbReference>
<dbReference type="RefSeq" id="WP_010916450.1">
    <property type="nucleotide sequence ID" value="NC_002689.2"/>
</dbReference>
<dbReference type="SMR" id="Q97CA8"/>
<dbReference type="STRING" id="273116.gene:9380964"/>
<dbReference type="PaxDb" id="273116-14324408"/>
<dbReference type="GeneID" id="1441680"/>
<dbReference type="KEGG" id="tvo:TVG0199907"/>
<dbReference type="eggNOG" id="arCOG02097">
    <property type="taxonomic scope" value="Archaea"/>
</dbReference>
<dbReference type="HOGENOM" id="CLU_1212642_0_0_2"/>
<dbReference type="OrthoDB" id="56320at2157"/>
<dbReference type="UniPathway" id="UPA00053">
    <property type="reaction ID" value="UER00086"/>
</dbReference>
<dbReference type="Proteomes" id="UP000001017">
    <property type="component" value="Chromosome"/>
</dbReference>
<dbReference type="GO" id="GO:0003855">
    <property type="term" value="F:3-dehydroquinate dehydratase activity"/>
    <property type="evidence" value="ECO:0007669"/>
    <property type="project" value="UniProtKB-UniRule"/>
</dbReference>
<dbReference type="GO" id="GO:0046279">
    <property type="term" value="P:3,4-dihydroxybenzoate biosynthetic process"/>
    <property type="evidence" value="ECO:0007669"/>
    <property type="project" value="TreeGrafter"/>
</dbReference>
<dbReference type="GO" id="GO:0008652">
    <property type="term" value="P:amino acid biosynthetic process"/>
    <property type="evidence" value="ECO:0007669"/>
    <property type="project" value="UniProtKB-KW"/>
</dbReference>
<dbReference type="GO" id="GO:0009073">
    <property type="term" value="P:aromatic amino acid family biosynthetic process"/>
    <property type="evidence" value="ECO:0007669"/>
    <property type="project" value="UniProtKB-KW"/>
</dbReference>
<dbReference type="GO" id="GO:0009423">
    <property type="term" value="P:chorismate biosynthetic process"/>
    <property type="evidence" value="ECO:0007669"/>
    <property type="project" value="UniProtKB-UniRule"/>
</dbReference>
<dbReference type="CDD" id="cd00502">
    <property type="entry name" value="DHQase_I"/>
    <property type="match status" value="1"/>
</dbReference>
<dbReference type="Gene3D" id="3.20.20.70">
    <property type="entry name" value="Aldolase class I"/>
    <property type="match status" value="1"/>
</dbReference>
<dbReference type="HAMAP" id="MF_00214">
    <property type="entry name" value="AroD"/>
    <property type="match status" value="1"/>
</dbReference>
<dbReference type="InterPro" id="IPR013785">
    <property type="entry name" value="Aldolase_TIM"/>
</dbReference>
<dbReference type="InterPro" id="IPR001381">
    <property type="entry name" value="DHquinase_I"/>
</dbReference>
<dbReference type="InterPro" id="IPR050146">
    <property type="entry name" value="Type-I_3-dehydroquinase"/>
</dbReference>
<dbReference type="NCBIfam" id="NF002321">
    <property type="entry name" value="PRK01261.1"/>
    <property type="match status" value="1"/>
</dbReference>
<dbReference type="PANTHER" id="PTHR43699">
    <property type="entry name" value="3-DEHYDROQUINATE DEHYDRATASE"/>
    <property type="match status" value="1"/>
</dbReference>
<dbReference type="PANTHER" id="PTHR43699:SF1">
    <property type="entry name" value="3-DEHYDROQUINATE DEHYDRATASE"/>
    <property type="match status" value="1"/>
</dbReference>
<dbReference type="Pfam" id="PF01487">
    <property type="entry name" value="DHquinase_I"/>
    <property type="match status" value="1"/>
</dbReference>
<dbReference type="SUPFAM" id="SSF51569">
    <property type="entry name" value="Aldolase"/>
    <property type="match status" value="1"/>
</dbReference>
<comment type="function">
    <text evidence="1">Involved in the third step of the chorismate pathway, which leads to the biosynthesis of aromatic amino acids. Catalyzes the cis-dehydration of 3-dehydroquinate (DHQ) and introduces the first double bond of the aromatic ring to yield 3-dehydroshikimate.</text>
</comment>
<comment type="catalytic activity">
    <reaction evidence="1">
        <text>3-dehydroquinate = 3-dehydroshikimate + H2O</text>
        <dbReference type="Rhea" id="RHEA:21096"/>
        <dbReference type="ChEBI" id="CHEBI:15377"/>
        <dbReference type="ChEBI" id="CHEBI:16630"/>
        <dbReference type="ChEBI" id="CHEBI:32364"/>
        <dbReference type="EC" id="4.2.1.10"/>
    </reaction>
</comment>
<comment type="pathway">
    <text evidence="1">Metabolic intermediate biosynthesis; chorismate biosynthesis; chorismate from D-erythrose 4-phosphate and phosphoenolpyruvate: step 3/7.</text>
</comment>
<comment type="subunit">
    <text evidence="1">Homodimer.</text>
</comment>
<comment type="similarity">
    <text evidence="1">Belongs to the type-I 3-dehydroquinase family.</text>
</comment>
<organism>
    <name type="scientific">Thermoplasma volcanium (strain ATCC 51530 / DSM 4299 / JCM 9571 / NBRC 15438 / GSS1)</name>
    <dbReference type="NCBI Taxonomy" id="273116"/>
    <lineage>
        <taxon>Archaea</taxon>
        <taxon>Methanobacteriati</taxon>
        <taxon>Thermoplasmatota</taxon>
        <taxon>Thermoplasmata</taxon>
        <taxon>Thermoplasmatales</taxon>
        <taxon>Thermoplasmataceae</taxon>
        <taxon>Thermoplasma</taxon>
    </lineage>
</organism>
<evidence type="ECO:0000255" key="1">
    <source>
        <dbReference type="HAMAP-Rule" id="MF_00214"/>
    </source>
</evidence>
<sequence>MPIIKSSRVNIGRFTIGGSIPIVIISIFDHDAKSLTEKFETKKLSDKNLYEIRFDLFDKVNIDEELEIIRALDEMDIDYIFTYRGHDPEKIYETAITKMVPAVDMDLSLLNKVNRRSPDTRIMVSYHTDSSKDMIEKLDEMLKANADIVKVACNYKDEKNFFKDLIEIAQRKEISGKPVLFIPMGKSFLRVISAYYVSDMVYAKYDKETAMGQPDPDYYNKAFSLFNYIG</sequence>
<reference key="1">
    <citation type="journal article" date="2000" name="Proc. Natl. Acad. Sci. U.S.A.">
        <title>Archaeal adaptation to higher temperatures revealed by genomic sequence of Thermoplasma volcanium.</title>
        <authorList>
            <person name="Kawashima T."/>
            <person name="Amano N."/>
            <person name="Koike H."/>
            <person name="Makino S."/>
            <person name="Higuchi S."/>
            <person name="Kawashima-Ohya Y."/>
            <person name="Watanabe K."/>
            <person name="Yamazaki M."/>
            <person name="Kanehori K."/>
            <person name="Kawamoto T."/>
            <person name="Nunoshiba T."/>
            <person name="Yamamoto Y."/>
            <person name="Aramaki H."/>
            <person name="Makino K."/>
            <person name="Suzuki M."/>
        </authorList>
    </citation>
    <scope>NUCLEOTIDE SEQUENCE [LARGE SCALE GENOMIC DNA]</scope>
    <source>
        <strain>ATCC 51530 / DSM 4299 / JCM 9571 / NBRC 15438 / GSS1</strain>
    </source>
</reference>
<gene>
    <name evidence="1" type="primary">aroD</name>
    <name type="ordered locus">TV0194</name>
    <name type="ORF">TVG0199907</name>
</gene>
<feature type="chain" id="PRO_0000138841" description="3-dehydroquinate dehydratase">
    <location>
        <begin position="1"/>
        <end position="230"/>
    </location>
</feature>
<feature type="active site" description="Proton donor/acceptor" evidence="1">
    <location>
        <position position="127"/>
    </location>
</feature>
<feature type="active site" description="Schiff-base intermediate with substrate" evidence="1">
    <location>
        <position position="150"/>
    </location>
</feature>
<feature type="binding site" evidence="1">
    <location>
        <position position="26"/>
    </location>
    <ligand>
        <name>3-dehydroquinate</name>
        <dbReference type="ChEBI" id="CHEBI:32364"/>
    </ligand>
</feature>
<feature type="binding site" evidence="1">
    <location>
        <begin position="51"/>
        <end position="53"/>
    </location>
    <ligand>
        <name>3-dehydroquinate</name>
        <dbReference type="ChEBI" id="CHEBI:32364"/>
    </ligand>
</feature>
<feature type="binding site" evidence="1">
    <location>
        <position position="84"/>
    </location>
    <ligand>
        <name>3-dehydroquinate</name>
        <dbReference type="ChEBI" id="CHEBI:32364"/>
    </ligand>
</feature>
<feature type="binding site" evidence="1">
    <location>
        <position position="190"/>
    </location>
    <ligand>
        <name>3-dehydroquinate</name>
        <dbReference type="ChEBI" id="CHEBI:32364"/>
    </ligand>
</feature>
<feature type="binding site" evidence="1">
    <location>
        <position position="209"/>
    </location>
    <ligand>
        <name>3-dehydroquinate</name>
        <dbReference type="ChEBI" id="CHEBI:32364"/>
    </ligand>
</feature>
<feature type="binding site" evidence="1">
    <location>
        <position position="213"/>
    </location>
    <ligand>
        <name>3-dehydroquinate</name>
        <dbReference type="ChEBI" id="CHEBI:32364"/>
    </ligand>
</feature>
<proteinExistence type="inferred from homology"/>
<accession>Q97CA8</accession>